<gene>
    <name evidence="1" type="primary">arnB</name>
    <name type="ordered locus">c2795</name>
</gene>
<evidence type="ECO:0000255" key="1">
    <source>
        <dbReference type="HAMAP-Rule" id="MF_01167"/>
    </source>
</evidence>
<evidence type="ECO:0000305" key="2"/>
<keyword id="KW-0032">Aminotransferase</keyword>
<keyword id="KW-0046">Antibiotic resistance</keyword>
<keyword id="KW-0441">Lipid A biosynthesis</keyword>
<keyword id="KW-0444">Lipid biosynthesis</keyword>
<keyword id="KW-0443">Lipid metabolism</keyword>
<keyword id="KW-0448">Lipopolysaccharide biosynthesis</keyword>
<keyword id="KW-0663">Pyridoxal phosphate</keyword>
<keyword id="KW-1185">Reference proteome</keyword>
<keyword id="KW-0808">Transferase</keyword>
<name>ARNB_ECOL6</name>
<feature type="chain" id="PRO_0000110019" description="UDP-4-amino-4-deoxy-L-arabinose--oxoglutarate aminotransferase">
    <location>
        <begin position="1"/>
        <end position="379"/>
    </location>
</feature>
<feature type="modified residue" description="N6-(pyridoxal phosphate)lysine" evidence="1">
    <location>
        <position position="182"/>
    </location>
</feature>
<dbReference type="EC" id="2.6.1.87" evidence="1"/>
<dbReference type="EMBL" id="AE014075">
    <property type="protein sequence ID" value="AAN81249.1"/>
    <property type="status" value="ALT_INIT"/>
    <property type="molecule type" value="Genomic_DNA"/>
</dbReference>
<dbReference type="RefSeq" id="WP_011076488.1">
    <property type="nucleotide sequence ID" value="NZ_CP051263.1"/>
</dbReference>
<dbReference type="SMR" id="Q8FFM3"/>
<dbReference type="STRING" id="199310.c2795"/>
<dbReference type="KEGG" id="ecc:c2795"/>
<dbReference type="eggNOG" id="COG0399">
    <property type="taxonomic scope" value="Bacteria"/>
</dbReference>
<dbReference type="HOGENOM" id="CLU_033332_0_3_6"/>
<dbReference type="UniPathway" id="UPA00030"/>
<dbReference type="UniPathway" id="UPA00032">
    <property type="reaction ID" value="UER00493"/>
</dbReference>
<dbReference type="Proteomes" id="UP000001410">
    <property type="component" value="Chromosome"/>
</dbReference>
<dbReference type="GO" id="GO:0016020">
    <property type="term" value="C:membrane"/>
    <property type="evidence" value="ECO:0007669"/>
    <property type="project" value="GOC"/>
</dbReference>
<dbReference type="GO" id="GO:0030170">
    <property type="term" value="F:pyridoxal phosphate binding"/>
    <property type="evidence" value="ECO:0007669"/>
    <property type="project" value="TreeGrafter"/>
</dbReference>
<dbReference type="GO" id="GO:0099620">
    <property type="term" value="F:UDP-4-amino-4-deoxy-L-arabinose aminotransferase"/>
    <property type="evidence" value="ECO:0007669"/>
    <property type="project" value="UniProtKB-EC"/>
</dbReference>
<dbReference type="GO" id="GO:0009245">
    <property type="term" value="P:lipid A biosynthetic process"/>
    <property type="evidence" value="ECO:0007669"/>
    <property type="project" value="UniProtKB-KW"/>
</dbReference>
<dbReference type="GO" id="GO:0009103">
    <property type="term" value="P:lipopolysaccharide biosynthetic process"/>
    <property type="evidence" value="ECO:0007669"/>
    <property type="project" value="UniProtKB-UniRule"/>
</dbReference>
<dbReference type="GO" id="GO:0046677">
    <property type="term" value="P:response to antibiotic"/>
    <property type="evidence" value="ECO:0007669"/>
    <property type="project" value="UniProtKB-KW"/>
</dbReference>
<dbReference type="CDD" id="cd00616">
    <property type="entry name" value="AHBA_syn"/>
    <property type="match status" value="1"/>
</dbReference>
<dbReference type="FunFam" id="3.40.640.10:FF:000040">
    <property type="entry name" value="UDP-4-amino-4-deoxy-L-arabinose--oxoglutarate aminotransferase"/>
    <property type="match status" value="1"/>
</dbReference>
<dbReference type="FunFam" id="3.90.1150.10:FF:000030">
    <property type="entry name" value="UDP-4-amino-4-deoxy-L-arabinose--oxoglutarate aminotransferase"/>
    <property type="match status" value="1"/>
</dbReference>
<dbReference type="Gene3D" id="3.90.1150.10">
    <property type="entry name" value="Aspartate Aminotransferase, domain 1"/>
    <property type="match status" value="1"/>
</dbReference>
<dbReference type="Gene3D" id="3.40.640.10">
    <property type="entry name" value="Type I PLP-dependent aspartate aminotransferase-like (Major domain)"/>
    <property type="match status" value="1"/>
</dbReference>
<dbReference type="HAMAP" id="MF_01167">
    <property type="entry name" value="ArnB_transfer"/>
    <property type="match status" value="1"/>
</dbReference>
<dbReference type="InterPro" id="IPR022850">
    <property type="entry name" value="ArnB_NH2Trfase"/>
</dbReference>
<dbReference type="InterPro" id="IPR000653">
    <property type="entry name" value="DegT/StrS_aminotransferase"/>
</dbReference>
<dbReference type="InterPro" id="IPR015424">
    <property type="entry name" value="PyrdxlP-dep_Trfase"/>
</dbReference>
<dbReference type="InterPro" id="IPR015421">
    <property type="entry name" value="PyrdxlP-dep_Trfase_major"/>
</dbReference>
<dbReference type="InterPro" id="IPR015422">
    <property type="entry name" value="PyrdxlP-dep_Trfase_small"/>
</dbReference>
<dbReference type="NCBIfam" id="NF008658">
    <property type="entry name" value="PRK11658.1"/>
    <property type="match status" value="1"/>
</dbReference>
<dbReference type="PANTHER" id="PTHR30244">
    <property type="entry name" value="TRANSAMINASE"/>
    <property type="match status" value="1"/>
</dbReference>
<dbReference type="PANTHER" id="PTHR30244:SF41">
    <property type="entry name" value="UDP-4-AMINO-4-DEOXY-L-ARABINOSE--OXOGLUTARATE AMINOTRANSFERASE"/>
    <property type="match status" value="1"/>
</dbReference>
<dbReference type="Pfam" id="PF01041">
    <property type="entry name" value="DegT_DnrJ_EryC1"/>
    <property type="match status" value="1"/>
</dbReference>
<dbReference type="PIRSF" id="PIRSF000390">
    <property type="entry name" value="PLP_StrS"/>
    <property type="match status" value="1"/>
</dbReference>
<dbReference type="SUPFAM" id="SSF53383">
    <property type="entry name" value="PLP-dependent transferases"/>
    <property type="match status" value="1"/>
</dbReference>
<reference key="1">
    <citation type="journal article" date="2002" name="Proc. Natl. Acad. Sci. U.S.A.">
        <title>Extensive mosaic structure revealed by the complete genome sequence of uropathogenic Escherichia coli.</title>
        <authorList>
            <person name="Welch R.A."/>
            <person name="Burland V."/>
            <person name="Plunkett G. III"/>
            <person name="Redford P."/>
            <person name="Roesch P."/>
            <person name="Rasko D."/>
            <person name="Buckles E.L."/>
            <person name="Liou S.-R."/>
            <person name="Boutin A."/>
            <person name="Hackett J."/>
            <person name="Stroud D."/>
            <person name="Mayhew G.F."/>
            <person name="Rose D.J."/>
            <person name="Zhou S."/>
            <person name="Schwartz D.C."/>
            <person name="Perna N.T."/>
            <person name="Mobley H.L.T."/>
            <person name="Donnenberg M.S."/>
            <person name="Blattner F.R."/>
        </authorList>
    </citation>
    <scope>NUCLEOTIDE SEQUENCE [LARGE SCALE GENOMIC DNA]</scope>
    <source>
        <strain>CFT073 / ATCC 700928 / UPEC</strain>
    </source>
</reference>
<protein>
    <recommendedName>
        <fullName evidence="1">UDP-4-amino-4-deoxy-L-arabinose--oxoglutarate aminotransferase</fullName>
        <ecNumber evidence="1">2.6.1.87</ecNumber>
    </recommendedName>
    <alternativeName>
        <fullName evidence="1">UDP-(beta-L-threo-pentapyranosyl-4''-ulose diphosphate) aminotransferase</fullName>
        <shortName evidence="1">UDP-Ara4O aminotransferase</shortName>
    </alternativeName>
    <alternativeName>
        <fullName evidence="1">UDP-4-amino-4-deoxy-L-arabinose aminotransferase</fullName>
    </alternativeName>
</protein>
<sequence>MSGFLPFSRPAMGVEELAAVKEVLESGWITTGPKNQALEQAFCQLTGNQHAIAVSSATAGMHITLMALEIGKGDEVITPSLTWVSTLNMISLLGATPVMVDVDRDTLMVTPEAIEAAITPRTKAIIPVHYAGAPADIDAIRAIGERYGIAVIEDAAHAVGTYYKGRHIGAKGTAIFSFHAIKNITCAEGGLIVTDNENLARQLRMLKFHGLGVDAYDRHTWGRAPQAEVLTPGYKYNLTDINAAIALTQLVKLEHLNTRRREIAQQYQQALAALPFQPLSLPAWPHVHAWHLFIIRVDEQRCGISRDALMEALKERGIGTGLHFRAAHTQKYYRERFPTLSLPNTEWNSERICSLPLFPDMTTADADRVITALQQLAGQ</sequence>
<comment type="function">
    <text evidence="1">Catalyzes the conversion of UDP-4-keto-arabinose (UDP-Ara4O) to UDP-4-amino-4-deoxy-L-arabinose (UDP-L-Ara4N). The modified arabinose is attached to lipid A and is required for resistance to polymyxin and cationic antimicrobial peptides.</text>
</comment>
<comment type="catalytic activity">
    <reaction evidence="1">
        <text>UDP-4-amino-4-deoxy-beta-L-arabinose + 2-oxoglutarate = UDP-beta-L-threo-pentopyranos-4-ulose + L-glutamate</text>
        <dbReference type="Rhea" id="RHEA:24710"/>
        <dbReference type="ChEBI" id="CHEBI:16810"/>
        <dbReference type="ChEBI" id="CHEBI:29985"/>
        <dbReference type="ChEBI" id="CHEBI:58708"/>
        <dbReference type="ChEBI" id="CHEBI:58710"/>
        <dbReference type="EC" id="2.6.1.87"/>
    </reaction>
</comment>
<comment type="cofactor">
    <cofactor evidence="1">
        <name>pyridoxal 5'-phosphate</name>
        <dbReference type="ChEBI" id="CHEBI:597326"/>
    </cofactor>
</comment>
<comment type="pathway">
    <text evidence="1">Nucleotide-sugar biosynthesis; UDP-4-deoxy-4-formamido-beta-L-arabinose biosynthesis; UDP-4-deoxy-4-formamido-beta-L-arabinose from UDP-alpha-D-glucuronate: step 2/3.</text>
</comment>
<comment type="pathway">
    <text evidence="1">Bacterial outer membrane biogenesis; lipopolysaccharide biosynthesis.</text>
</comment>
<comment type="subunit">
    <text evidence="1">Homodimer.</text>
</comment>
<comment type="similarity">
    <text evidence="1">Belongs to the DegT/DnrJ/EryC1 family. ArnB subfamily.</text>
</comment>
<comment type="sequence caution" evidence="2">
    <conflict type="erroneous initiation">
        <sequence resource="EMBL-CDS" id="AAN81249"/>
    </conflict>
</comment>
<organism>
    <name type="scientific">Escherichia coli O6:H1 (strain CFT073 / ATCC 700928 / UPEC)</name>
    <dbReference type="NCBI Taxonomy" id="199310"/>
    <lineage>
        <taxon>Bacteria</taxon>
        <taxon>Pseudomonadati</taxon>
        <taxon>Pseudomonadota</taxon>
        <taxon>Gammaproteobacteria</taxon>
        <taxon>Enterobacterales</taxon>
        <taxon>Enterobacteriaceae</taxon>
        <taxon>Escherichia</taxon>
    </lineage>
</organism>
<accession>Q8FFM3</accession>
<proteinExistence type="inferred from homology"/>